<protein>
    <recommendedName>
        <fullName>Probable polyketide synthase 14</fullName>
        <shortName>dipks14</shortName>
        <ecNumber>2.3.1.-</ecNumber>
    </recommendedName>
</protein>
<organism>
    <name type="scientific">Dictyostelium discoideum</name>
    <name type="common">Social amoeba</name>
    <dbReference type="NCBI Taxonomy" id="44689"/>
    <lineage>
        <taxon>Eukaryota</taxon>
        <taxon>Amoebozoa</taxon>
        <taxon>Evosea</taxon>
        <taxon>Eumycetozoa</taxon>
        <taxon>Dictyostelia</taxon>
        <taxon>Dictyosteliales</taxon>
        <taxon>Dictyosteliaceae</taxon>
        <taxon>Dictyostelium</taxon>
    </lineage>
</organism>
<dbReference type="EC" id="2.3.1.-"/>
<dbReference type="EMBL" id="AAFI02000008">
    <property type="protein sequence ID" value="EAL71067.2"/>
    <property type="molecule type" value="Genomic_DNA"/>
</dbReference>
<dbReference type="RefSeq" id="XP_644930.2">
    <property type="nucleotide sequence ID" value="XM_639838.2"/>
</dbReference>
<dbReference type="SMR" id="Q558Y6"/>
<dbReference type="FunCoup" id="Q558Y6">
    <property type="interactions" value="4"/>
</dbReference>
<dbReference type="STRING" id="44689.Q558Y6"/>
<dbReference type="GlyGen" id="Q558Y6">
    <property type="glycosylation" value="1 site"/>
</dbReference>
<dbReference type="PaxDb" id="44689-DDB0235176"/>
<dbReference type="EnsemblProtists" id="EAL71067">
    <property type="protein sequence ID" value="EAL71067"/>
    <property type="gene ID" value="DDB_G0272859"/>
</dbReference>
<dbReference type="GeneID" id="8618609"/>
<dbReference type="KEGG" id="ddi:DDB_G0272859"/>
<dbReference type="dictyBase" id="DDB_G0272859">
    <property type="gene designation" value="pks14"/>
</dbReference>
<dbReference type="VEuPathDB" id="AmoebaDB:DDB_G0272859"/>
<dbReference type="eggNOG" id="KOG1178">
    <property type="taxonomic scope" value="Eukaryota"/>
</dbReference>
<dbReference type="eggNOG" id="KOG1202">
    <property type="taxonomic scope" value="Eukaryota"/>
</dbReference>
<dbReference type="HOGENOM" id="CLU_000022_31_0_1"/>
<dbReference type="InParanoid" id="Q558Y6"/>
<dbReference type="OMA" id="EKCDPQQ"/>
<dbReference type="PhylomeDB" id="Q558Y6"/>
<dbReference type="PRO" id="PR:Q558Y6"/>
<dbReference type="Proteomes" id="UP000002195">
    <property type="component" value="Chromosome 2"/>
</dbReference>
<dbReference type="GO" id="GO:0016020">
    <property type="term" value="C:membrane"/>
    <property type="evidence" value="ECO:0007669"/>
    <property type="project" value="UniProtKB-SubCell"/>
</dbReference>
<dbReference type="GO" id="GO:0004315">
    <property type="term" value="F:3-oxoacyl-[acyl-carrier-protein] synthase activity"/>
    <property type="evidence" value="ECO:0007669"/>
    <property type="project" value="InterPro"/>
</dbReference>
<dbReference type="GO" id="GO:0016491">
    <property type="term" value="F:oxidoreductase activity"/>
    <property type="evidence" value="ECO:0007669"/>
    <property type="project" value="InterPro"/>
</dbReference>
<dbReference type="GO" id="GO:0006633">
    <property type="term" value="P:fatty acid biosynthetic process"/>
    <property type="evidence" value="ECO:0000318"/>
    <property type="project" value="GO_Central"/>
</dbReference>
<dbReference type="CDD" id="cd05195">
    <property type="entry name" value="enoyl_red"/>
    <property type="match status" value="1"/>
</dbReference>
<dbReference type="CDD" id="cd08954">
    <property type="entry name" value="KR_1_FAS_SDR_x"/>
    <property type="match status" value="1"/>
</dbReference>
<dbReference type="CDD" id="cd00833">
    <property type="entry name" value="PKS"/>
    <property type="match status" value="1"/>
</dbReference>
<dbReference type="CDD" id="cd05235">
    <property type="entry name" value="SDR_e1"/>
    <property type="match status" value="1"/>
</dbReference>
<dbReference type="Gene3D" id="3.30.70.3290">
    <property type="match status" value="1"/>
</dbReference>
<dbReference type="Gene3D" id="3.40.47.10">
    <property type="match status" value="1"/>
</dbReference>
<dbReference type="Gene3D" id="3.40.366.10">
    <property type="entry name" value="Malonyl-Coenzyme A Acyl Carrier Protein, domain 2"/>
    <property type="match status" value="1"/>
</dbReference>
<dbReference type="Gene3D" id="3.90.180.10">
    <property type="entry name" value="Medium-chain alcohol dehydrogenases, catalytic domain"/>
    <property type="match status" value="1"/>
</dbReference>
<dbReference type="Gene3D" id="3.40.50.720">
    <property type="entry name" value="NAD(P)-binding Rossmann-like Domain"/>
    <property type="match status" value="3"/>
</dbReference>
<dbReference type="Gene3D" id="3.10.129.110">
    <property type="entry name" value="Polyketide synthase dehydratase"/>
    <property type="match status" value="1"/>
</dbReference>
<dbReference type="Gene3D" id="3.40.50.150">
    <property type="entry name" value="Vaccinia Virus protein VP39"/>
    <property type="match status" value="1"/>
</dbReference>
<dbReference type="InterPro" id="IPR001227">
    <property type="entry name" value="Ac_transferase_dom_sf"/>
</dbReference>
<dbReference type="InterPro" id="IPR036736">
    <property type="entry name" value="ACP-like_sf"/>
</dbReference>
<dbReference type="InterPro" id="IPR014043">
    <property type="entry name" value="Acyl_transferase_dom"/>
</dbReference>
<dbReference type="InterPro" id="IPR016035">
    <property type="entry name" value="Acyl_Trfase/lysoPLipase"/>
</dbReference>
<dbReference type="InterPro" id="IPR013154">
    <property type="entry name" value="ADH-like_N"/>
</dbReference>
<dbReference type="InterPro" id="IPR013120">
    <property type="entry name" value="Far_NAD-bd"/>
</dbReference>
<dbReference type="InterPro" id="IPR011032">
    <property type="entry name" value="GroES-like_sf"/>
</dbReference>
<dbReference type="InterPro" id="IPR018201">
    <property type="entry name" value="Ketoacyl_synth_AS"/>
</dbReference>
<dbReference type="InterPro" id="IPR014031">
    <property type="entry name" value="Ketoacyl_synth_C"/>
</dbReference>
<dbReference type="InterPro" id="IPR014030">
    <property type="entry name" value="Ketoacyl_synth_N"/>
</dbReference>
<dbReference type="InterPro" id="IPR016036">
    <property type="entry name" value="Malonyl_transacylase_ACP-bd"/>
</dbReference>
<dbReference type="InterPro" id="IPR013217">
    <property type="entry name" value="Methyltransf_12"/>
</dbReference>
<dbReference type="InterPro" id="IPR036291">
    <property type="entry name" value="NAD(P)-bd_dom_sf"/>
</dbReference>
<dbReference type="InterPro" id="IPR032821">
    <property type="entry name" value="PKS_assoc"/>
</dbReference>
<dbReference type="InterPro" id="IPR020841">
    <property type="entry name" value="PKS_Beta-ketoAc_synthase_dom"/>
</dbReference>
<dbReference type="InterPro" id="IPR042104">
    <property type="entry name" value="PKS_dehydratase_sf"/>
</dbReference>
<dbReference type="InterPro" id="IPR020843">
    <property type="entry name" value="PKS_ER"/>
</dbReference>
<dbReference type="InterPro" id="IPR013968">
    <property type="entry name" value="PKS_KR"/>
</dbReference>
<dbReference type="InterPro" id="IPR049900">
    <property type="entry name" value="PKS_mFAS_DH"/>
</dbReference>
<dbReference type="InterPro" id="IPR050444">
    <property type="entry name" value="Polyketide_Synthase"/>
</dbReference>
<dbReference type="InterPro" id="IPR009081">
    <property type="entry name" value="PP-bd_ACP"/>
</dbReference>
<dbReference type="InterPro" id="IPR029063">
    <property type="entry name" value="SAM-dependent_MTases_sf"/>
</dbReference>
<dbReference type="InterPro" id="IPR010080">
    <property type="entry name" value="Thioester_reductase-like_dom"/>
</dbReference>
<dbReference type="InterPro" id="IPR016039">
    <property type="entry name" value="Thiolase-like"/>
</dbReference>
<dbReference type="PANTHER" id="PTHR45681:SF4">
    <property type="entry name" value="BETA-KETOACYL SYNTHASE FAMILY PROTEIN-RELATED"/>
    <property type="match status" value="1"/>
</dbReference>
<dbReference type="PANTHER" id="PTHR45681">
    <property type="entry name" value="POLYKETIDE SYNTHASE 44-RELATED"/>
    <property type="match status" value="1"/>
</dbReference>
<dbReference type="Pfam" id="PF23297">
    <property type="entry name" value="ACP_SdgA_C"/>
    <property type="match status" value="1"/>
</dbReference>
<dbReference type="Pfam" id="PF00698">
    <property type="entry name" value="Acyl_transf_1"/>
    <property type="match status" value="1"/>
</dbReference>
<dbReference type="Pfam" id="PF08240">
    <property type="entry name" value="ADH_N"/>
    <property type="match status" value="1"/>
</dbReference>
<dbReference type="Pfam" id="PF13602">
    <property type="entry name" value="ADH_zinc_N_2"/>
    <property type="match status" value="1"/>
</dbReference>
<dbReference type="Pfam" id="PF16197">
    <property type="entry name" value="KAsynt_C_assoc"/>
    <property type="match status" value="1"/>
</dbReference>
<dbReference type="Pfam" id="PF00109">
    <property type="entry name" value="ketoacyl-synt"/>
    <property type="match status" value="1"/>
</dbReference>
<dbReference type="Pfam" id="PF02801">
    <property type="entry name" value="Ketoacyl-synt_C"/>
    <property type="match status" value="1"/>
</dbReference>
<dbReference type="Pfam" id="PF08659">
    <property type="entry name" value="KR"/>
    <property type="match status" value="1"/>
</dbReference>
<dbReference type="Pfam" id="PF08242">
    <property type="entry name" value="Methyltransf_12"/>
    <property type="match status" value="1"/>
</dbReference>
<dbReference type="Pfam" id="PF07993">
    <property type="entry name" value="NAD_binding_4"/>
    <property type="match status" value="1"/>
</dbReference>
<dbReference type="SMART" id="SM00827">
    <property type="entry name" value="PKS_AT"/>
    <property type="match status" value="1"/>
</dbReference>
<dbReference type="SMART" id="SM00829">
    <property type="entry name" value="PKS_ER"/>
    <property type="match status" value="1"/>
</dbReference>
<dbReference type="SMART" id="SM00822">
    <property type="entry name" value="PKS_KR"/>
    <property type="match status" value="1"/>
</dbReference>
<dbReference type="SMART" id="SM00825">
    <property type="entry name" value="PKS_KS"/>
    <property type="match status" value="1"/>
</dbReference>
<dbReference type="SUPFAM" id="SSF47336">
    <property type="entry name" value="ACP-like"/>
    <property type="match status" value="1"/>
</dbReference>
<dbReference type="SUPFAM" id="SSF52151">
    <property type="entry name" value="FabD/lysophospholipase-like"/>
    <property type="match status" value="1"/>
</dbReference>
<dbReference type="SUPFAM" id="SSF50129">
    <property type="entry name" value="GroES-like"/>
    <property type="match status" value="1"/>
</dbReference>
<dbReference type="SUPFAM" id="SSF51735">
    <property type="entry name" value="NAD(P)-binding Rossmann-fold domains"/>
    <property type="match status" value="3"/>
</dbReference>
<dbReference type="SUPFAM" id="SSF55048">
    <property type="entry name" value="Probable ACP-binding domain of malonyl-CoA ACP transacylase"/>
    <property type="match status" value="1"/>
</dbReference>
<dbReference type="SUPFAM" id="SSF53335">
    <property type="entry name" value="S-adenosyl-L-methionine-dependent methyltransferases"/>
    <property type="match status" value="1"/>
</dbReference>
<dbReference type="SUPFAM" id="SSF53901">
    <property type="entry name" value="Thiolase-like"/>
    <property type="match status" value="1"/>
</dbReference>
<dbReference type="PROSITE" id="PS50075">
    <property type="entry name" value="CARRIER"/>
    <property type="match status" value="1"/>
</dbReference>
<dbReference type="PROSITE" id="PS00606">
    <property type="entry name" value="KS3_1"/>
    <property type="match status" value="1"/>
</dbReference>
<dbReference type="PROSITE" id="PS52004">
    <property type="entry name" value="KS3_2"/>
    <property type="match status" value="1"/>
</dbReference>
<dbReference type="PROSITE" id="PS52019">
    <property type="entry name" value="PKS_MFAS_DH"/>
    <property type="match status" value="1"/>
</dbReference>
<feature type="chain" id="PRO_0000376887" description="Probable polyketide synthase 14">
    <location>
        <begin position="1"/>
        <end position="2998"/>
    </location>
</feature>
<feature type="transmembrane region" description="Helical" evidence="2">
    <location>
        <begin position="1979"/>
        <end position="1999"/>
    </location>
</feature>
<feature type="transmembrane region" description="Helical" evidence="2">
    <location>
        <begin position="2621"/>
        <end position="2641"/>
    </location>
</feature>
<feature type="domain" description="Ketosynthase family 3 (KS3)" evidence="4">
    <location>
        <begin position="19"/>
        <end position="456"/>
    </location>
</feature>
<feature type="domain" description="PKS/mFAS DH" evidence="5">
    <location>
        <begin position="962"/>
        <end position="1249"/>
    </location>
</feature>
<feature type="domain" description="Carrier" evidence="3">
    <location>
        <begin position="2476"/>
        <end position="2553"/>
    </location>
</feature>
<feature type="region of interest" description="Acyl/malonyl transferase">
    <location>
        <begin position="657"/>
        <end position="690"/>
    </location>
</feature>
<feature type="region of interest" description="N-terminal hotdog fold" evidence="5">
    <location>
        <begin position="962"/>
        <end position="1084"/>
    </location>
</feature>
<feature type="region of interest" description="C-terminal hotdog fold" evidence="5">
    <location>
        <begin position="1101"/>
        <end position="1249"/>
    </location>
</feature>
<feature type="region of interest" description="Disordered" evidence="7">
    <location>
        <begin position="2559"/>
        <end position="2578"/>
    </location>
</feature>
<feature type="compositionally biased region" description="Low complexity" evidence="7">
    <location>
        <begin position="2561"/>
        <end position="2573"/>
    </location>
</feature>
<feature type="active site" description="For beta-ketoacyl synthase activity" evidence="4">
    <location>
        <position position="189"/>
    </location>
</feature>
<feature type="active site" description="For beta-ketoacyl synthase activity" evidence="4">
    <location>
        <position position="331"/>
    </location>
</feature>
<feature type="active site" description="For beta-ketoacyl synthase activity" evidence="4">
    <location>
        <position position="376"/>
    </location>
</feature>
<feature type="active site" description="For acyl/malonyl transferase activity" evidence="6">
    <location>
        <position position="667"/>
    </location>
</feature>
<feature type="active site" description="Proton acceptor; for dehydratase activity" evidence="5">
    <location>
        <position position="996"/>
    </location>
</feature>
<feature type="active site" description="Proton donor; for dehydratase activity" evidence="5">
    <location>
        <position position="1159"/>
    </location>
</feature>
<feature type="modified residue" description="O-(pantetheine 4'-phosphoryl)serine" evidence="3">
    <location>
        <position position="2513"/>
    </location>
</feature>
<keyword id="KW-0472">Membrane</keyword>
<keyword id="KW-0596">Phosphopantetheine</keyword>
<keyword id="KW-0597">Phosphoprotein</keyword>
<keyword id="KW-1185">Reference proteome</keyword>
<keyword id="KW-0808">Transferase</keyword>
<keyword id="KW-0812">Transmembrane</keyword>
<keyword id="KW-1133">Transmembrane helix</keyword>
<comment type="function">
    <text evidence="1">Probable polyketide synthase.</text>
</comment>
<comment type="cofactor">
    <cofactor evidence="1">
        <name>pantetheine 4'-phosphate</name>
        <dbReference type="ChEBI" id="CHEBI:47942"/>
    </cofactor>
    <text evidence="1">Binds 1 phosphopantetheine covalently.</text>
</comment>
<comment type="subcellular location">
    <subcellularLocation>
        <location evidence="8">Membrane</location>
        <topology evidence="8">Multi-pass membrane protein</topology>
    </subcellularLocation>
</comment>
<comment type="domain">
    <text evidence="1">Modular protein that is responsible for the completion of one condensation-processing cycle. The beta-ketoacyl synthase region is responsible for the actual condensation reaction while the acyl/malonyl transferase region is responsible for incorporating carboxylic acids units onto an acyl carrier protein (ACP) domain (By similarity).</text>
</comment>
<comment type="miscellaneous">
    <text>Encoded by one of the numerous copies of polyketide synthase genes.</text>
</comment>
<name>PKS14_DICDI</name>
<gene>
    <name type="primary">pks14</name>
    <name type="ORF">DDB_G0272859</name>
</gene>
<sequence>MTNNTNLSSYKLAKPNENEDDIAIIGIGFRLPSGDLSKSNDSTKELWNNLMNGFDGVVKTTERWSDNFNELGEISNGNAGLLPLDEWKSFDPLFFGINPSEVSTIDPQQRLLLKCTWEALEDSNIDPIKIRGSKTSVFIGCTSVDYKDISKNPNSTQTNVFGSALSTIANRISHCFDFSGESITIDTACSSSLNAIRLGYQSIKSGFSNLSIVGGVNSLFETNSSKSFSYLNMLSKSQGKCMTFDESADGFVRGEGVALLVLKSLKQSVADGNNIYCVIKGASSNVDGNGLKDKQNFYSPSSISQADNVNNAFSSTNGTVKLEDIVYIEAHGTGTPTGDPVELDGMSRVFKTHSSNNSTLSQQPLLIGSIKSSIGHLEAASGSASLVKCCLMFKNKYLTPNINFKNPNPSIKFDEWNLKVVTEPIHFKDLQKTDNFSMILNNFGITGSNCCLILSEYKGNNKNNNNKNSCTHSEDLKNLQTQKQYLVPFSANSVQSLKQYESVVNDYLFKKSNDFKEFVKQQIFSKSSSLYQRCVVTASNWNEFSENIESTNKIQTSNTQSSNMSKVQNNPITVFVFAGQGSQYNTMSLELYNNEPIFKKSMDLLDDELLKYYEYSVLNKFRSIIDDGDRSIQHPTIAQPIVCMLTISLFELYKHWGIEASFIVGHSLGEIPAAYCSGMITLDTLCYLIYHRSLAQIETHCNGGRMLSIGISSEDYLSSNYSTKYPDIEIACYNSPNSIVLGGNEQQLNQISNELKDKGIFSTMLASLSSFHTSNQKITKDQILNLNINHQSPTIPIFSTVTTNLYESSTTPFNSEYVYNNIIKPVKFSQTISNLYKHIEINKLGNEIVFIELAPHPTLQFYLKQMIPVSSLSTTEETNFKVSIYSALHKKKNDIQEIQKTIAKLYCDNRYNINFKSQFKDEQIINNNNNQEIILPNYQWDDKKYWKEDLVQQKHKFQGPPIDQLGFSLIESSPNVKSYQTFIDISKKPFKYLKGHIVNGKYYFPGCGYIDNLLKLYPSQDLTIGSMEFKSPLILIDGINQCLQTNIFQTGKTEFKVQFHFKDNKSNEWVQSSNGNFQLFTSGNNVNKKYNIQELINNKCNLTKLTKNELYQNIKSKTGLSYNGEFQTVSECYLGDDCSLAVIPIKPSSSTLFTPSVLDSCLHSSVGLVDEQCQLVFEKVEGFKYYSSNIPSFLELSSDKEIKLYSYSYSFKRIGDSFSSSIIVMFEDGRILIEMNKLVCKSLTIIKDSSIIQPPLNDLYSTYNQLIDSPIPSPSKFTQQLDEPDRMNEKVKNYDISILKNFISNQLYSNIVKRCPQLNIEIIKSMDIIQLLEKYLNDDKHSKLFKSIFETLKDSVIDVNNVDDHQHYYNENNIEHYEILLKSTKIVAKLLFPLIDDDPSNDTPQSLFDNGMLDNFYSNYHILKIHNQVIANIISESILPNLNEKMVFRILEFGGGVASLSLIVLNKINELLIEFPNSEIDIEYTWSDISPSFIPDAKSKFSHINQNIHIIYKPLNLEKQLITEQMLKPSYYDFVIMSNVLHVVKQLKPPINQIYEILKPNGQLVFVEPIYKSILLDNIFGVFDQWWCFTDLTIRKDRCCMPKESWNNLLLDCSFNEVKVIMSIEIPSFYVIHTQKPSIYSNLNNIETITQINDDNNNNIIIYGDNELSLFKEVSTTTISNVQQFNELIKKSIITDKSIVYFTKAINQLTIDNFKFVTLEYIQINQILLSNNLKCKNVLITLNSDNINYLSASVIGAARYFEVFPQLNLFSLDFDQKSINNKELNNTIQLLLDSNKFIQKEFKIRDNKVYYERYKRNSNLNKTFVISESFVNDINQLYAKLSPNLEFILDSKKSLKENQLEVHVKATGINYKDYLLYCGLLPPEMVSHNNDINDPEFGLEFSGIVSAIGSNINDFKIGDQIYGIGYDTTSTHIIVDYNQIYHKPTNINHIEAASIPGVYLTSYHSIFNVGNLKIKRNESILIHSGSGGIGLSALNILKWKGHKSHIFVTVGSKEKEQYLINTYGDFITGIYSTMNKDYSEEIKLKLKQLKSDKHGVDLILNTLSSDYMDSNFKCLNIGGRIVDLSITHLNPNEYINNNNFKYNFGYHNVELLFIEKTLIQRMLKKITRAIENHELNLMPITEFSNSTIKVAIEYINKRKHIGKIVVNNDINILSDLIDVHKNQINSNFSILKTNYKINSNNQDHLGSTILVTGQSGIILEILKWIVKFSENVKNIIVLSKSSMKWGLELLIKKNKHINFHFKSVDVSNSISVDNAIDQILNGNSKTITNIDSIFHFAFEFTFCGVNEIDMKSLEISHGAKTMGAINLHNQSIKRNWKLKQFILSSSVASIIGSVDQCSYVCSNRVLDSLSRYRKSIGLPSICTNYGSVQSAGLVSRNESIAQLLDGQGLYPLPINMILGLLDSQIQNVFQSTNLIVSPFNFKTLFEHYKKHPMIHKFDFITNLIENNELTNNKKIENDTSIDSLFLNKLSELLSIEVSKINQDLRLLEYGADSLLTVQLKNWIDKEIYSSLITIQQLQSNTISSSIKLITNQLKLKIGDGQQQQHRQNKKNNNIPENKTIESEEFWKNEIKLDDDEFNLISSNSIRNQIEIKEFKENELRIFLTGSTGFLGAYLLWYLIQMECCSVVYCLLRNKSKSSNPVDEILNNLKHHQLYYKQLNEKHLSKIIPIVGDLTKKKFGLSDYNYSLISNNTNLLLNSGADINLRANYYECKQVNVNSLKEIIKLSLFGKPTQQQHHQPKPILTISTFSVFYNQEFNGSIATPKLETINNLPTGYMQSKVISEFLLTEASSRFKIPSIIFRAPSIFSNPDTGIGHYGDITQLMLQSSFKLGYFPSDKEVDINLLCSPVNWVADNIIKIMFNDNFKDSSDSSLKIYNVYGEVINSVKILQVLKNEKGGNCKEVNFKQWKRMVMDSNEKVCIKLRTFHTLDFDQKYNFEKAYGISKEQISFLQSIGSYGNGGENNLIQMIFNHILAKYSK</sequence>
<reference key="1">
    <citation type="journal article" date="2002" name="Nature">
        <title>Sequence and analysis of chromosome 2 of Dictyostelium discoideum.</title>
        <authorList>
            <person name="Gloeckner G."/>
            <person name="Eichinger L."/>
            <person name="Szafranski K."/>
            <person name="Pachebat J.A."/>
            <person name="Bankier A.T."/>
            <person name="Dear P.H."/>
            <person name="Lehmann R."/>
            <person name="Baumgart C."/>
            <person name="Parra G."/>
            <person name="Abril J.F."/>
            <person name="Guigo R."/>
            <person name="Kumpf K."/>
            <person name="Tunggal B."/>
            <person name="Cox E.C."/>
            <person name="Quail M.A."/>
            <person name="Platzer M."/>
            <person name="Rosenthal A."/>
            <person name="Noegel A.A."/>
        </authorList>
    </citation>
    <scope>NUCLEOTIDE SEQUENCE [LARGE SCALE GENOMIC DNA]</scope>
    <source>
        <strain>AX4</strain>
    </source>
</reference>
<reference key="2">
    <citation type="journal article" date="2005" name="Nature">
        <title>The genome of the social amoeba Dictyostelium discoideum.</title>
        <authorList>
            <person name="Eichinger L."/>
            <person name="Pachebat J.A."/>
            <person name="Gloeckner G."/>
            <person name="Rajandream M.A."/>
            <person name="Sucgang R."/>
            <person name="Berriman M."/>
            <person name="Song J."/>
            <person name="Olsen R."/>
            <person name="Szafranski K."/>
            <person name="Xu Q."/>
            <person name="Tunggal B."/>
            <person name="Kummerfeld S."/>
            <person name="Madera M."/>
            <person name="Konfortov B.A."/>
            <person name="Rivero F."/>
            <person name="Bankier A.T."/>
            <person name="Lehmann R."/>
            <person name="Hamlin N."/>
            <person name="Davies R."/>
            <person name="Gaudet P."/>
            <person name="Fey P."/>
            <person name="Pilcher K."/>
            <person name="Chen G."/>
            <person name="Saunders D."/>
            <person name="Sodergren E.J."/>
            <person name="Davis P."/>
            <person name="Kerhornou A."/>
            <person name="Nie X."/>
            <person name="Hall N."/>
            <person name="Anjard C."/>
            <person name="Hemphill L."/>
            <person name="Bason N."/>
            <person name="Farbrother P."/>
            <person name="Desany B."/>
            <person name="Just E."/>
            <person name="Morio T."/>
            <person name="Rost R."/>
            <person name="Churcher C.M."/>
            <person name="Cooper J."/>
            <person name="Haydock S."/>
            <person name="van Driessche N."/>
            <person name="Cronin A."/>
            <person name="Goodhead I."/>
            <person name="Muzny D.M."/>
            <person name="Mourier T."/>
            <person name="Pain A."/>
            <person name="Lu M."/>
            <person name="Harper D."/>
            <person name="Lindsay R."/>
            <person name="Hauser H."/>
            <person name="James K.D."/>
            <person name="Quiles M."/>
            <person name="Madan Babu M."/>
            <person name="Saito T."/>
            <person name="Buchrieser C."/>
            <person name="Wardroper A."/>
            <person name="Felder M."/>
            <person name="Thangavelu M."/>
            <person name="Johnson D."/>
            <person name="Knights A."/>
            <person name="Loulseged H."/>
            <person name="Mungall K.L."/>
            <person name="Oliver K."/>
            <person name="Price C."/>
            <person name="Quail M.A."/>
            <person name="Urushihara H."/>
            <person name="Hernandez J."/>
            <person name="Rabbinowitsch E."/>
            <person name="Steffen D."/>
            <person name="Sanders M."/>
            <person name="Ma J."/>
            <person name="Kohara Y."/>
            <person name="Sharp S."/>
            <person name="Simmonds M.N."/>
            <person name="Spiegler S."/>
            <person name="Tivey A."/>
            <person name="Sugano S."/>
            <person name="White B."/>
            <person name="Walker D."/>
            <person name="Woodward J.R."/>
            <person name="Winckler T."/>
            <person name="Tanaka Y."/>
            <person name="Shaulsky G."/>
            <person name="Schleicher M."/>
            <person name="Weinstock G.M."/>
            <person name="Rosenthal A."/>
            <person name="Cox E.C."/>
            <person name="Chisholm R.L."/>
            <person name="Gibbs R.A."/>
            <person name="Loomis W.F."/>
            <person name="Platzer M."/>
            <person name="Kay R.R."/>
            <person name="Williams J.G."/>
            <person name="Dear P.H."/>
            <person name="Noegel A.A."/>
            <person name="Barrell B.G."/>
            <person name="Kuspa A."/>
        </authorList>
    </citation>
    <scope>NUCLEOTIDE SEQUENCE [LARGE SCALE GENOMIC DNA]</scope>
    <source>
        <strain>AX4</strain>
    </source>
</reference>
<reference key="3">
    <citation type="journal article" date="2007" name="Bioinformatics">
        <title>Polyketide synthase genes and the natural products potential of Dictyostelium discoideum.</title>
        <authorList>
            <person name="Zucko J."/>
            <person name="Skunca N."/>
            <person name="Curk T."/>
            <person name="Zupan B."/>
            <person name="Long P.F."/>
            <person name="Cullum J."/>
            <person name="Kessin R.H."/>
            <person name="Hranueli D."/>
        </authorList>
    </citation>
    <scope>IDENTIFICATION</scope>
</reference>
<accession>Q558Y6</accession>
<proteinExistence type="inferred from homology"/>
<evidence type="ECO:0000250" key="1"/>
<evidence type="ECO:0000255" key="2"/>
<evidence type="ECO:0000255" key="3">
    <source>
        <dbReference type="PROSITE-ProRule" id="PRU00258"/>
    </source>
</evidence>
<evidence type="ECO:0000255" key="4">
    <source>
        <dbReference type="PROSITE-ProRule" id="PRU01348"/>
    </source>
</evidence>
<evidence type="ECO:0000255" key="5">
    <source>
        <dbReference type="PROSITE-ProRule" id="PRU01363"/>
    </source>
</evidence>
<evidence type="ECO:0000255" key="6">
    <source>
        <dbReference type="PROSITE-ProRule" id="PRU10022"/>
    </source>
</evidence>
<evidence type="ECO:0000256" key="7">
    <source>
        <dbReference type="SAM" id="MobiDB-lite"/>
    </source>
</evidence>
<evidence type="ECO:0000305" key="8"/>